<dbReference type="EMBL" id="AE006641">
    <property type="protein sequence ID" value="AAK40739.1"/>
    <property type="molecule type" value="Genomic_DNA"/>
</dbReference>
<dbReference type="PIR" id="D90185">
    <property type="entry name" value="D90185"/>
</dbReference>
<dbReference type="RefSeq" id="WP_009988772.1">
    <property type="nucleotide sequence ID" value="NC_002754.1"/>
</dbReference>
<dbReference type="PDB" id="9FHL">
    <property type="method" value="EM"/>
    <property type="resolution" value="2.50 A"/>
    <property type="chains" value="G=1-214"/>
</dbReference>
<dbReference type="PDB" id="9FRA">
    <property type="method" value="EM"/>
    <property type="resolution" value="2.80 A"/>
    <property type="chains" value="G=1-214"/>
</dbReference>
<dbReference type="PDB" id="9FRK">
    <property type="method" value="EM"/>
    <property type="resolution" value="3.00 A"/>
    <property type="chains" value="G=1-214"/>
</dbReference>
<dbReference type="PDB" id="9FRL">
    <property type="method" value="EM"/>
    <property type="resolution" value="2.97 A"/>
    <property type="chains" value="G=1-214"/>
</dbReference>
<dbReference type="PDB" id="9FS6">
    <property type="method" value="EM"/>
    <property type="resolution" value="2.90 A"/>
    <property type="chains" value="G=1-214"/>
</dbReference>
<dbReference type="PDB" id="9FS8">
    <property type="method" value="EM"/>
    <property type="resolution" value="3.70 A"/>
    <property type="chains" value="G=1-214"/>
</dbReference>
<dbReference type="PDB" id="9FSF">
    <property type="method" value="EM"/>
    <property type="resolution" value="2.80 A"/>
    <property type="chains" value="G=1-214"/>
</dbReference>
<dbReference type="PDB" id="9FY0">
    <property type="method" value="EM"/>
    <property type="resolution" value="2.90 A"/>
    <property type="chains" value="G=1-214"/>
</dbReference>
<dbReference type="PDBsum" id="9FHL"/>
<dbReference type="PDBsum" id="9FRA"/>
<dbReference type="PDBsum" id="9FRK"/>
<dbReference type="PDBsum" id="9FRL"/>
<dbReference type="PDBsum" id="9FS6"/>
<dbReference type="PDBsum" id="9FS8"/>
<dbReference type="PDBsum" id="9FSF"/>
<dbReference type="PDBsum" id="9FY0"/>
<dbReference type="EMDB" id="EMD-50445"/>
<dbReference type="EMDB" id="EMD-50709"/>
<dbReference type="EMDB" id="EMD-50716"/>
<dbReference type="EMDB" id="EMD-50717"/>
<dbReference type="EMDB" id="EMD-50724"/>
<dbReference type="EMDB" id="EMD-50725"/>
<dbReference type="EMDB" id="EMD-50727"/>
<dbReference type="EMDB" id="EMD-50854"/>
<dbReference type="SMR" id="Q980A6"/>
<dbReference type="FunCoup" id="Q980A6">
    <property type="interactions" value="64"/>
</dbReference>
<dbReference type="STRING" id="273057.SSO0411"/>
<dbReference type="PaxDb" id="273057-SSO0411"/>
<dbReference type="EnsemblBacteria" id="AAK40739">
    <property type="protein sequence ID" value="AAK40739"/>
    <property type="gene ID" value="SSO0411"/>
</dbReference>
<dbReference type="KEGG" id="sso:SSO0411"/>
<dbReference type="PATRIC" id="fig|273057.12.peg.406"/>
<dbReference type="eggNOG" id="arCOG01946">
    <property type="taxonomic scope" value="Archaea"/>
</dbReference>
<dbReference type="HOGENOM" id="CLU_1275302_0_0_2"/>
<dbReference type="InParanoid" id="Q980A6"/>
<dbReference type="Proteomes" id="UP000001974">
    <property type="component" value="Chromosome"/>
</dbReference>
<dbReference type="GO" id="GO:1990904">
    <property type="term" value="C:ribonucleoprotein complex"/>
    <property type="evidence" value="ECO:0007669"/>
    <property type="project" value="UniProtKB-KW"/>
</dbReference>
<dbReference type="GO" id="GO:0005840">
    <property type="term" value="C:ribosome"/>
    <property type="evidence" value="ECO:0007669"/>
    <property type="project" value="UniProtKB-KW"/>
</dbReference>
<dbReference type="GO" id="GO:0003735">
    <property type="term" value="F:structural constituent of ribosome"/>
    <property type="evidence" value="ECO:0007669"/>
    <property type="project" value="InterPro"/>
</dbReference>
<dbReference type="GO" id="GO:0006412">
    <property type="term" value="P:translation"/>
    <property type="evidence" value="ECO:0007669"/>
    <property type="project" value="UniProtKB-UniRule"/>
</dbReference>
<dbReference type="HAMAP" id="MF_00512">
    <property type="entry name" value="Ribosomal_eS6"/>
    <property type="match status" value="1"/>
</dbReference>
<dbReference type="InterPro" id="IPR001377">
    <property type="entry name" value="Ribosomal_eS6"/>
</dbReference>
<dbReference type="InterPro" id="IPR020924">
    <property type="entry name" value="Ribosomal_eS6_arc"/>
</dbReference>
<dbReference type="InterPro" id="IPR018282">
    <property type="entry name" value="Ribosomal_eS6_CS"/>
</dbReference>
<dbReference type="NCBIfam" id="NF003292">
    <property type="entry name" value="PRK04290.1-1"/>
    <property type="match status" value="1"/>
</dbReference>
<dbReference type="PANTHER" id="PTHR11502">
    <property type="entry name" value="40S RIBOSOMAL PROTEIN S6"/>
    <property type="match status" value="1"/>
</dbReference>
<dbReference type="Pfam" id="PF01092">
    <property type="entry name" value="Ribosomal_S6e"/>
    <property type="match status" value="1"/>
</dbReference>
<dbReference type="SMART" id="SM01405">
    <property type="entry name" value="Ribosomal_S6e"/>
    <property type="match status" value="1"/>
</dbReference>
<dbReference type="PROSITE" id="PS00578">
    <property type="entry name" value="RIBOSOMAL_S6E"/>
    <property type="match status" value="1"/>
</dbReference>
<protein>
    <recommendedName>
        <fullName evidence="1">Small ribosomal subunit protein eS6</fullName>
    </recommendedName>
    <alternativeName>
        <fullName evidence="2">30S ribosomal protein S6e</fullName>
    </alternativeName>
</protein>
<feature type="chain" id="PRO_0000137361" description="Small ribosomal subunit protein eS6">
    <location>
        <begin position="1"/>
        <end position="214"/>
    </location>
</feature>
<keyword id="KW-0002">3D-structure</keyword>
<keyword id="KW-1185">Reference proteome</keyword>
<keyword id="KW-0687">Ribonucleoprotein</keyword>
<keyword id="KW-0689">Ribosomal protein</keyword>
<gene>
    <name evidence="1" type="primary">rps6e</name>
    <name type="ordered locus">SSO0411</name>
</gene>
<proteinExistence type="evidence at protein level"/>
<name>RS6E_SACS2</name>
<accession>Q980A6</accession>
<evidence type="ECO:0000255" key="1">
    <source>
        <dbReference type="HAMAP-Rule" id="MF_00512"/>
    </source>
</evidence>
<evidence type="ECO:0000305" key="2"/>
<reference key="1">
    <citation type="journal article" date="2001" name="Proc. Natl. Acad. Sci. U.S.A.">
        <title>The complete genome of the crenarchaeon Sulfolobus solfataricus P2.</title>
        <authorList>
            <person name="She Q."/>
            <person name="Singh R.K."/>
            <person name="Confalonieri F."/>
            <person name="Zivanovic Y."/>
            <person name="Allard G."/>
            <person name="Awayez M.J."/>
            <person name="Chan-Weiher C.C.-Y."/>
            <person name="Clausen I.G."/>
            <person name="Curtis B.A."/>
            <person name="De Moors A."/>
            <person name="Erauso G."/>
            <person name="Fletcher C."/>
            <person name="Gordon P.M.K."/>
            <person name="Heikamp-de Jong I."/>
            <person name="Jeffries A.C."/>
            <person name="Kozera C.J."/>
            <person name="Medina N."/>
            <person name="Peng X."/>
            <person name="Thi-Ngoc H.P."/>
            <person name="Redder P."/>
            <person name="Schenk M.E."/>
            <person name="Theriault C."/>
            <person name="Tolstrup N."/>
            <person name="Charlebois R.L."/>
            <person name="Doolittle W.F."/>
            <person name="Duguet M."/>
            <person name="Gaasterland T."/>
            <person name="Garrett R.A."/>
            <person name="Ragan M.A."/>
            <person name="Sensen C.W."/>
            <person name="Van der Oost J."/>
        </authorList>
    </citation>
    <scope>NUCLEOTIDE SEQUENCE [LARGE SCALE GENOMIC DNA]</scope>
    <source>
        <strain>ATCC 35092 / DSM 1617 / JCM 11322 / P2</strain>
    </source>
</reference>
<organism>
    <name type="scientific">Saccharolobus solfataricus (strain ATCC 35092 / DSM 1617 / JCM 11322 / P2)</name>
    <name type="common">Sulfolobus solfataricus</name>
    <dbReference type="NCBI Taxonomy" id="273057"/>
    <lineage>
        <taxon>Archaea</taxon>
        <taxon>Thermoproteota</taxon>
        <taxon>Thermoprotei</taxon>
        <taxon>Sulfolobales</taxon>
        <taxon>Sulfolobaceae</taxon>
        <taxon>Saccharolobus</taxon>
    </lineage>
</organism>
<sequence length="214" mass="23720">MPDFKIVISDPQSVEPKRIKVKVKASDQVKSITGEKDGKAVPQAKVNEKTKQLLNVDTLLTLEITKQEGDKKVKVKGHFKVDVDNSVPDNEVWISKTMAEKFGAEDFEAFAYRTKTLQISVDQNKATNLVGLKIGDVFEANQLIGLPVKLKITGGSDNSGFPMRFDVIGAAKRKILLSGPPGFYPNENGERRRKTIRGNTISQEIVQINTIIVR</sequence>
<comment type="similarity">
    <text evidence="1">Belongs to the eukaryotic ribosomal protein eS6 family.</text>
</comment>